<comment type="function">
    <text evidence="1">This protein is a component of the acetyl coenzyme A carboxylase complex; first, biotin carboxylase catalyzes the carboxylation of the carrier protein and then the transcarboxylase transfers the carboxyl group to form malonyl-CoA.</text>
</comment>
<comment type="catalytic activity">
    <reaction evidence="1">
        <text>N(6)-biotinyl-L-lysyl-[protein] + hydrogencarbonate + ATP = N(6)-carboxybiotinyl-L-lysyl-[protein] + ADP + phosphate + H(+)</text>
        <dbReference type="Rhea" id="RHEA:13501"/>
        <dbReference type="Rhea" id="RHEA-COMP:10505"/>
        <dbReference type="Rhea" id="RHEA-COMP:10506"/>
        <dbReference type="ChEBI" id="CHEBI:15378"/>
        <dbReference type="ChEBI" id="CHEBI:17544"/>
        <dbReference type="ChEBI" id="CHEBI:30616"/>
        <dbReference type="ChEBI" id="CHEBI:43474"/>
        <dbReference type="ChEBI" id="CHEBI:83144"/>
        <dbReference type="ChEBI" id="CHEBI:83145"/>
        <dbReference type="ChEBI" id="CHEBI:456216"/>
        <dbReference type="EC" id="6.3.4.14"/>
    </reaction>
</comment>
<comment type="cofactor">
    <cofactor evidence="5">
        <name>Mg(2+)</name>
        <dbReference type="ChEBI" id="CHEBI:18420"/>
    </cofactor>
    <cofactor evidence="5">
        <name>Mn(2+)</name>
        <dbReference type="ChEBI" id="CHEBI:29035"/>
    </cofactor>
    <text evidence="5">Binds 2 magnesium or manganese ions per subunit.</text>
</comment>
<comment type="pathway">
    <text>Lipid metabolism; malonyl-CoA biosynthesis; malonyl-CoA from acetyl-CoA: step 1/1.</text>
</comment>
<comment type="subunit">
    <text evidence="6">Acetyl-CoA carboxylase is a heterohexamer composed of biotin carboxyl carrier protein, biotin carboxylase and two subunits each of ACCase subunit alpha and ACCase plastid-coded subunit beta (accD).</text>
</comment>
<comment type="subcellular location">
    <subcellularLocation>
        <location evidence="6">Plastid</location>
        <location evidence="6">Chloroplast</location>
    </subcellularLocation>
</comment>
<gene>
    <name type="ORF">POPTRDRAFT_831870</name>
</gene>
<feature type="transit peptide" description="Chloroplast" evidence="3">
    <location>
        <begin position="1"/>
        <end position="51"/>
    </location>
</feature>
<feature type="chain" id="PRO_0000391773" description="Biotin carboxylase 1, chloroplastic">
    <location>
        <begin position="52"/>
        <end position="528"/>
    </location>
</feature>
<feature type="domain" description="ATP-grasp" evidence="4">
    <location>
        <begin position="183"/>
        <end position="380"/>
    </location>
</feature>
<feature type="active site" evidence="2">
    <location>
        <position position="355"/>
    </location>
</feature>
<feature type="binding site" evidence="2">
    <location>
        <position position="179"/>
    </location>
    <ligand>
        <name>ATP</name>
        <dbReference type="ChEBI" id="CHEBI:30616"/>
    </ligand>
</feature>
<feature type="binding site" evidence="2">
    <location>
        <position position="221"/>
    </location>
    <ligand>
        <name>ATP</name>
        <dbReference type="ChEBI" id="CHEBI:30616"/>
    </ligand>
</feature>
<feature type="binding site" evidence="2">
    <location>
        <begin position="227"/>
        <end position="228"/>
    </location>
    <ligand>
        <name>ATP</name>
        <dbReference type="ChEBI" id="CHEBI:30616"/>
    </ligand>
</feature>
<feature type="binding site" evidence="2">
    <location>
        <begin position="263"/>
        <end position="266"/>
    </location>
    <ligand>
        <name>ATP</name>
        <dbReference type="ChEBI" id="CHEBI:30616"/>
    </ligand>
</feature>
<feature type="binding site" evidence="2">
    <location>
        <position position="271"/>
    </location>
    <ligand>
        <name>ATP</name>
        <dbReference type="ChEBI" id="CHEBI:30616"/>
    </ligand>
</feature>
<feature type="binding site" evidence="2">
    <location>
        <position position="300"/>
    </location>
    <ligand>
        <name>hydrogencarbonate</name>
        <dbReference type="ChEBI" id="CHEBI:17544"/>
    </ligand>
</feature>
<feature type="binding site" evidence="2">
    <location>
        <position position="338"/>
    </location>
    <ligand>
        <name>ATP</name>
        <dbReference type="ChEBI" id="CHEBI:30616"/>
    </ligand>
</feature>
<feature type="binding site" evidence="5">
    <location>
        <position position="338"/>
    </location>
    <ligand>
        <name>Mg(2+)</name>
        <dbReference type="ChEBI" id="CHEBI:18420"/>
        <label>1</label>
    </ligand>
</feature>
<feature type="binding site" evidence="5">
    <location>
        <position position="338"/>
    </location>
    <ligand>
        <name>Mn(2+)</name>
        <dbReference type="ChEBI" id="CHEBI:29035"/>
        <label>1</label>
    </ligand>
</feature>
<feature type="binding site" evidence="2">
    <location>
        <position position="351"/>
    </location>
    <ligand>
        <name>ATP</name>
        <dbReference type="ChEBI" id="CHEBI:30616"/>
    </ligand>
</feature>
<feature type="binding site" evidence="5">
    <location>
        <position position="351"/>
    </location>
    <ligand>
        <name>Mg(2+)</name>
        <dbReference type="ChEBI" id="CHEBI:18420"/>
        <label>1</label>
    </ligand>
</feature>
<feature type="binding site" evidence="5">
    <location>
        <position position="351"/>
    </location>
    <ligand>
        <name>Mg(2+)</name>
        <dbReference type="ChEBI" id="CHEBI:18420"/>
        <label>2</label>
    </ligand>
</feature>
<feature type="binding site" evidence="5">
    <location>
        <position position="351"/>
    </location>
    <ligand>
        <name>Mn(2+)</name>
        <dbReference type="ChEBI" id="CHEBI:29035"/>
        <label>1</label>
    </ligand>
</feature>
<feature type="binding site" evidence="5">
    <location>
        <position position="351"/>
    </location>
    <ligand>
        <name>Mn(2+)</name>
        <dbReference type="ChEBI" id="CHEBI:29035"/>
        <label>2</label>
    </ligand>
</feature>
<feature type="binding site" evidence="5">
    <location>
        <position position="353"/>
    </location>
    <ligand>
        <name>Mg(2+)</name>
        <dbReference type="ChEBI" id="CHEBI:18420"/>
        <label>2</label>
    </ligand>
</feature>
<feature type="binding site" evidence="5">
    <location>
        <position position="353"/>
    </location>
    <ligand>
        <name>Mn(2+)</name>
        <dbReference type="ChEBI" id="CHEBI:29035"/>
        <label>2</label>
    </ligand>
</feature>
<feature type="binding site" evidence="2">
    <location>
        <position position="355"/>
    </location>
    <ligand>
        <name>hydrogencarbonate</name>
        <dbReference type="ChEBI" id="CHEBI:17544"/>
    </ligand>
</feature>
<feature type="binding site" evidence="2">
    <location>
        <position position="358"/>
    </location>
    <ligand>
        <name>hydrogencarbonate</name>
        <dbReference type="ChEBI" id="CHEBI:17544"/>
    </ligand>
</feature>
<feature type="binding site" evidence="2">
    <location>
        <position position="401"/>
    </location>
    <ligand>
        <name>biotin</name>
        <dbReference type="ChEBI" id="CHEBI:57586"/>
    </ligand>
</feature>
<feature type="binding site" evidence="2">
    <location>
        <position position="401"/>
    </location>
    <ligand>
        <name>hydrogencarbonate</name>
        <dbReference type="ChEBI" id="CHEBI:17544"/>
    </ligand>
</feature>
<sequence length="528" mass="57707">MEATLPVCKSVTSTPGLFMGKTSGIRSSQCSFMMGNKVNFPRQRAQTAHVHCAKNGGALGVTCRAEKILVANRGEIAVRVIRTAHEMGIPCVAVYSTIDKDALHVKLADESVCIGEAPSSQSYLVIPNVLSAAISRRCTMLHPGYGFLAENAVFVEMCREHGINFIGPNPDSIRVMGDKSTARETMKKAGVPTVPGSDGLLQSTEEGVRLANEIGYPVMIKATAGGGGRGMRLAKEPDEFVKLLQQAKSEAAAAFGNDGVYLEKYVQNPRHIEFQVLADKFGNVVHFGERDCSIQRRNQKLLEEAPSPALTPELRKAMGDAAVSAAASIGYIGVGTVEFLLDERGSFYFMEMNTRIQVEHPVTEMISSVDLIEEQIRVAMGEKLRYKQEDIVLRGHSIECRINAEDAFKGFRPGPGRITAYLPSGGPFVRMDSHVYPDYVVPPSYDSLLGKLIVWAPTREKAIERMKRALDDTIITGVPTTIDYHKLILEIEDFKNGNVDTAFIPKHEKELAAPQQIIPAKQLTNSAA</sequence>
<reference key="1">
    <citation type="journal article" date="2006" name="Science">
        <title>The genome of black cottonwood, Populus trichocarpa (Torr. &amp; Gray).</title>
        <authorList>
            <person name="Tuskan G.A."/>
            <person name="Difazio S."/>
            <person name="Jansson S."/>
            <person name="Bohlmann J."/>
            <person name="Grigoriev I."/>
            <person name="Hellsten U."/>
            <person name="Putnam N."/>
            <person name="Ralph S."/>
            <person name="Rombauts S."/>
            <person name="Salamov A."/>
            <person name="Schein J."/>
            <person name="Sterck L."/>
            <person name="Aerts A."/>
            <person name="Bhalerao R.R."/>
            <person name="Bhalerao R.P."/>
            <person name="Blaudez D."/>
            <person name="Boerjan W."/>
            <person name="Brun A."/>
            <person name="Brunner A."/>
            <person name="Busov V."/>
            <person name="Campbell M."/>
            <person name="Carlson J."/>
            <person name="Chalot M."/>
            <person name="Chapman J."/>
            <person name="Chen G.-L."/>
            <person name="Cooper D."/>
            <person name="Coutinho P.M."/>
            <person name="Couturier J."/>
            <person name="Covert S."/>
            <person name="Cronk Q."/>
            <person name="Cunningham R."/>
            <person name="Davis J."/>
            <person name="Degroeve S."/>
            <person name="Dejardin A."/>
            <person name="dePamphilis C.W."/>
            <person name="Detter J."/>
            <person name="Dirks B."/>
            <person name="Dubchak I."/>
            <person name="Duplessis S."/>
            <person name="Ehlting J."/>
            <person name="Ellis B."/>
            <person name="Gendler K."/>
            <person name="Goodstein D."/>
            <person name="Gribskov M."/>
            <person name="Grimwood J."/>
            <person name="Groover A."/>
            <person name="Gunter L."/>
            <person name="Hamberger B."/>
            <person name="Heinze B."/>
            <person name="Helariutta Y."/>
            <person name="Henrissat B."/>
            <person name="Holligan D."/>
            <person name="Holt R."/>
            <person name="Huang W."/>
            <person name="Islam-Faridi N."/>
            <person name="Jones S."/>
            <person name="Jones-Rhoades M."/>
            <person name="Jorgensen R."/>
            <person name="Joshi C."/>
            <person name="Kangasjaervi J."/>
            <person name="Karlsson J."/>
            <person name="Kelleher C."/>
            <person name="Kirkpatrick R."/>
            <person name="Kirst M."/>
            <person name="Kohler A."/>
            <person name="Kalluri U."/>
            <person name="Larimer F."/>
            <person name="Leebens-Mack J."/>
            <person name="Leple J.-C."/>
            <person name="Locascio P."/>
            <person name="Lou Y."/>
            <person name="Lucas S."/>
            <person name="Martin F."/>
            <person name="Montanini B."/>
            <person name="Napoli C."/>
            <person name="Nelson D.R."/>
            <person name="Nelson C."/>
            <person name="Nieminen K."/>
            <person name="Nilsson O."/>
            <person name="Pereda V."/>
            <person name="Peter G."/>
            <person name="Philippe R."/>
            <person name="Pilate G."/>
            <person name="Poliakov A."/>
            <person name="Razumovskaya J."/>
            <person name="Richardson P."/>
            <person name="Rinaldi C."/>
            <person name="Ritland K."/>
            <person name="Rouze P."/>
            <person name="Ryaboy D."/>
            <person name="Schmutz J."/>
            <person name="Schrader J."/>
            <person name="Segerman B."/>
            <person name="Shin H."/>
            <person name="Siddiqui A."/>
            <person name="Sterky F."/>
            <person name="Terry A."/>
            <person name="Tsai C.-J."/>
            <person name="Uberbacher E."/>
            <person name="Unneberg P."/>
            <person name="Vahala J."/>
            <person name="Wall K."/>
            <person name="Wessler S."/>
            <person name="Yang G."/>
            <person name="Yin T."/>
            <person name="Douglas C."/>
            <person name="Marra M."/>
            <person name="Sandberg G."/>
            <person name="Van de Peer Y."/>
            <person name="Rokhsar D.S."/>
        </authorList>
    </citation>
    <scope>NUCLEOTIDE SEQUENCE [LARGE SCALE GENOMIC DNA]</scope>
    <source>
        <strain>cv. Nisqually</strain>
    </source>
</reference>
<reference key="2">
    <citation type="submission" date="2008-12" db="EMBL/GenBank/DDBJ databases">
        <authorList>
            <consortium name="US DOE Joint Genome Institute (JGI-PGF)"/>
            <person name="Grigoriev I.V."/>
            <person name="Terry A."/>
            <person name="Salamov A.A."/>
            <person name="Otillar R."/>
            <person name="Lou Y."/>
            <person name="Lucas S."/>
            <person name="Hammon N."/>
            <person name="Glavina del Rio T."/>
            <person name="Detter J."/>
            <person name="Kalin E."/>
            <person name="Tice H."/>
            <person name="Pitluck S."/>
            <person name="Chapman J."/>
            <person name="Putnam N.H."/>
            <person name="Brunner A."/>
            <person name="Busov V."/>
            <person name="Campbell M."/>
            <person name="Chalot M."/>
            <person name="Covert S."/>
            <person name="Davis J."/>
            <person name="DiFazio S."/>
            <person name="Gribskov M."/>
            <person name="Gunter L."/>
            <person name="Hamberger B."/>
            <person name="Jansson S."/>
            <person name="Joshi C."/>
            <person name="Larimer F."/>
            <person name="Martin F."/>
            <person name="Napoli C."/>
            <person name="Nelson D."/>
            <person name="Ralph S."/>
            <person name="Rombauts S."/>
            <person name="Rouze P."/>
            <person name="Schrader J."/>
            <person name="Tsai C."/>
            <person name="Vahala J."/>
            <person name="Tuskan G."/>
            <person name="Rokhsar D."/>
        </authorList>
    </citation>
    <scope>GENOME REANNOTATION</scope>
    <source>
        <strain>cv. Nisqually</strain>
    </source>
</reference>
<dbReference type="EC" id="6.3.4.14" evidence="1"/>
<dbReference type="EMBL" id="CM009295">
    <property type="protein sequence ID" value="EEE91650.1"/>
    <property type="molecule type" value="Genomic_DNA"/>
</dbReference>
<dbReference type="RefSeq" id="XP_002308127.1">
    <property type="nucleotide sequence ID" value="XM_002308091.2"/>
</dbReference>
<dbReference type="SMR" id="B9HBA8"/>
<dbReference type="FunCoup" id="B9HBA8">
    <property type="interactions" value="1026"/>
</dbReference>
<dbReference type="STRING" id="3694.B9HBA8"/>
<dbReference type="EnsemblPlants" id="Potri.006G078200.2.v4.1">
    <property type="protein sequence ID" value="Potri.006G078200.2.v4.1"/>
    <property type="gene ID" value="Potri.006G078200.v4.1"/>
</dbReference>
<dbReference type="Gramene" id="Potri.006G078200.2.v4.1">
    <property type="protein sequence ID" value="Potri.006G078200.2.v4.1"/>
    <property type="gene ID" value="Potri.006G078200.v4.1"/>
</dbReference>
<dbReference type="KEGG" id="pop:7485516"/>
<dbReference type="eggNOG" id="KOG0238">
    <property type="taxonomic scope" value="Eukaryota"/>
</dbReference>
<dbReference type="HOGENOM" id="CLU_000395_3_2_1"/>
<dbReference type="InParanoid" id="B9HBA8"/>
<dbReference type="OMA" id="FINKPKH"/>
<dbReference type="OrthoDB" id="196847at2759"/>
<dbReference type="UniPathway" id="UPA00655">
    <property type="reaction ID" value="UER00711"/>
</dbReference>
<dbReference type="Proteomes" id="UP000006729">
    <property type="component" value="Chromosome 6"/>
</dbReference>
<dbReference type="ExpressionAtlas" id="B9HBA8">
    <property type="expression patterns" value="baseline"/>
</dbReference>
<dbReference type="GO" id="GO:0009507">
    <property type="term" value="C:chloroplast"/>
    <property type="evidence" value="ECO:0007669"/>
    <property type="project" value="UniProtKB-SubCell"/>
</dbReference>
<dbReference type="GO" id="GO:0003989">
    <property type="term" value="F:acetyl-CoA carboxylase activity"/>
    <property type="evidence" value="ECO:0007669"/>
    <property type="project" value="UniProtKB-EC"/>
</dbReference>
<dbReference type="GO" id="GO:0005524">
    <property type="term" value="F:ATP binding"/>
    <property type="evidence" value="ECO:0007669"/>
    <property type="project" value="UniProtKB-KW"/>
</dbReference>
<dbReference type="GO" id="GO:0004075">
    <property type="term" value="F:biotin carboxylase activity"/>
    <property type="evidence" value="ECO:0007669"/>
    <property type="project" value="UniProtKB-EC"/>
</dbReference>
<dbReference type="GO" id="GO:0046872">
    <property type="term" value="F:metal ion binding"/>
    <property type="evidence" value="ECO:0007669"/>
    <property type="project" value="UniProtKB-KW"/>
</dbReference>
<dbReference type="GO" id="GO:0006633">
    <property type="term" value="P:fatty acid biosynthetic process"/>
    <property type="evidence" value="ECO:0007669"/>
    <property type="project" value="UniProtKB-KW"/>
</dbReference>
<dbReference type="GO" id="GO:2001295">
    <property type="term" value="P:malonyl-CoA biosynthetic process"/>
    <property type="evidence" value="ECO:0007669"/>
    <property type="project" value="UniProtKB-UniPathway"/>
</dbReference>
<dbReference type="FunFam" id="3.30.1490.20:FF:000018">
    <property type="entry name" value="Biotin carboxylase"/>
    <property type="match status" value="1"/>
</dbReference>
<dbReference type="FunFam" id="3.30.470.20:FF:000045">
    <property type="entry name" value="Biotin carboxylase"/>
    <property type="match status" value="1"/>
</dbReference>
<dbReference type="FunFam" id="3.40.50.20:FF:000010">
    <property type="entry name" value="Propionyl-CoA carboxylase subunit alpha"/>
    <property type="match status" value="1"/>
</dbReference>
<dbReference type="Gene3D" id="3.40.50.20">
    <property type="match status" value="1"/>
</dbReference>
<dbReference type="Gene3D" id="3.30.1490.20">
    <property type="entry name" value="ATP-grasp fold, A domain"/>
    <property type="match status" value="1"/>
</dbReference>
<dbReference type="Gene3D" id="3.30.470.20">
    <property type="entry name" value="ATP-grasp fold, B domain"/>
    <property type="match status" value="1"/>
</dbReference>
<dbReference type="InterPro" id="IPR051602">
    <property type="entry name" value="ACC_Biotin_Carboxylase"/>
</dbReference>
<dbReference type="InterPro" id="IPR004549">
    <property type="entry name" value="Acetyl_CoA_COase_biotin_COase"/>
</dbReference>
<dbReference type="InterPro" id="IPR011761">
    <property type="entry name" value="ATP-grasp"/>
</dbReference>
<dbReference type="InterPro" id="IPR013815">
    <property type="entry name" value="ATP_grasp_subdomain_1"/>
</dbReference>
<dbReference type="InterPro" id="IPR005481">
    <property type="entry name" value="BC-like_N"/>
</dbReference>
<dbReference type="InterPro" id="IPR011764">
    <property type="entry name" value="Biotin_carboxylation_dom"/>
</dbReference>
<dbReference type="InterPro" id="IPR005482">
    <property type="entry name" value="Biotin_COase_C"/>
</dbReference>
<dbReference type="InterPro" id="IPR005479">
    <property type="entry name" value="CbamoylP_synth_lsu-like_ATP-bd"/>
</dbReference>
<dbReference type="InterPro" id="IPR016185">
    <property type="entry name" value="PreATP-grasp_dom_sf"/>
</dbReference>
<dbReference type="InterPro" id="IPR011054">
    <property type="entry name" value="Rudment_hybrid_motif"/>
</dbReference>
<dbReference type="NCBIfam" id="TIGR00514">
    <property type="entry name" value="accC"/>
    <property type="match status" value="1"/>
</dbReference>
<dbReference type="NCBIfam" id="NF006367">
    <property type="entry name" value="PRK08591.1"/>
    <property type="match status" value="1"/>
</dbReference>
<dbReference type="PANTHER" id="PTHR48095:SF2">
    <property type="entry name" value="BIOTIN CARBOXYLASE, CHLOROPLASTIC"/>
    <property type="match status" value="1"/>
</dbReference>
<dbReference type="PANTHER" id="PTHR48095">
    <property type="entry name" value="PYRUVATE CARBOXYLASE SUBUNIT A"/>
    <property type="match status" value="1"/>
</dbReference>
<dbReference type="Pfam" id="PF02785">
    <property type="entry name" value="Biotin_carb_C"/>
    <property type="match status" value="1"/>
</dbReference>
<dbReference type="Pfam" id="PF00289">
    <property type="entry name" value="Biotin_carb_N"/>
    <property type="match status" value="1"/>
</dbReference>
<dbReference type="Pfam" id="PF02786">
    <property type="entry name" value="CPSase_L_D2"/>
    <property type="match status" value="1"/>
</dbReference>
<dbReference type="SMART" id="SM00878">
    <property type="entry name" value="Biotin_carb_C"/>
    <property type="match status" value="1"/>
</dbReference>
<dbReference type="SUPFAM" id="SSF56059">
    <property type="entry name" value="Glutathione synthetase ATP-binding domain-like"/>
    <property type="match status" value="1"/>
</dbReference>
<dbReference type="SUPFAM" id="SSF52440">
    <property type="entry name" value="PreATP-grasp domain"/>
    <property type="match status" value="1"/>
</dbReference>
<dbReference type="SUPFAM" id="SSF51246">
    <property type="entry name" value="Rudiment single hybrid motif"/>
    <property type="match status" value="1"/>
</dbReference>
<dbReference type="PROSITE" id="PS50975">
    <property type="entry name" value="ATP_GRASP"/>
    <property type="match status" value="1"/>
</dbReference>
<dbReference type="PROSITE" id="PS50979">
    <property type="entry name" value="BC"/>
    <property type="match status" value="1"/>
</dbReference>
<dbReference type="PROSITE" id="PS00866">
    <property type="entry name" value="CPSASE_1"/>
    <property type="match status" value="1"/>
</dbReference>
<dbReference type="PROSITE" id="PS00867">
    <property type="entry name" value="CPSASE_2"/>
    <property type="match status" value="1"/>
</dbReference>
<evidence type="ECO:0000250" key="1">
    <source>
        <dbReference type="UniProtKB" id="O04983"/>
    </source>
</evidence>
<evidence type="ECO:0000250" key="2">
    <source>
        <dbReference type="UniProtKB" id="P24182"/>
    </source>
</evidence>
<evidence type="ECO:0000255" key="3"/>
<evidence type="ECO:0000255" key="4">
    <source>
        <dbReference type="PROSITE-ProRule" id="PRU00409"/>
    </source>
</evidence>
<evidence type="ECO:0000255" key="5">
    <source>
        <dbReference type="PROSITE-ProRule" id="PRU00969"/>
    </source>
</evidence>
<evidence type="ECO:0000305" key="6"/>
<protein>
    <recommendedName>
        <fullName>Biotin carboxylase 1, chloroplastic</fullName>
        <ecNumber evidence="1">6.3.4.14</ecNumber>
    </recommendedName>
    <alternativeName>
        <fullName evidence="6">Acetyl-coenzyme A carboxylase biotin carboxylase subunit A 1</fullName>
    </alternativeName>
</protein>
<proteinExistence type="evidence at transcript level"/>
<name>ACCC1_POPTR</name>
<keyword id="KW-0067">ATP-binding</keyword>
<keyword id="KW-0092">Biotin</keyword>
<keyword id="KW-0150">Chloroplast</keyword>
<keyword id="KW-0275">Fatty acid biosynthesis</keyword>
<keyword id="KW-0276">Fatty acid metabolism</keyword>
<keyword id="KW-0436">Ligase</keyword>
<keyword id="KW-0444">Lipid biosynthesis</keyword>
<keyword id="KW-0443">Lipid metabolism</keyword>
<keyword id="KW-0460">Magnesium</keyword>
<keyword id="KW-0464">Manganese</keyword>
<keyword id="KW-0479">Metal-binding</keyword>
<keyword id="KW-0547">Nucleotide-binding</keyword>
<keyword id="KW-0934">Plastid</keyword>
<keyword id="KW-1185">Reference proteome</keyword>
<keyword id="KW-0809">Transit peptide</keyword>
<accession>B9HBA8</accession>
<organism>
    <name type="scientific">Populus trichocarpa</name>
    <name type="common">Western balsam poplar</name>
    <name type="synonym">Populus balsamifera subsp. trichocarpa</name>
    <dbReference type="NCBI Taxonomy" id="3694"/>
    <lineage>
        <taxon>Eukaryota</taxon>
        <taxon>Viridiplantae</taxon>
        <taxon>Streptophyta</taxon>
        <taxon>Embryophyta</taxon>
        <taxon>Tracheophyta</taxon>
        <taxon>Spermatophyta</taxon>
        <taxon>Magnoliopsida</taxon>
        <taxon>eudicotyledons</taxon>
        <taxon>Gunneridae</taxon>
        <taxon>Pentapetalae</taxon>
        <taxon>rosids</taxon>
        <taxon>fabids</taxon>
        <taxon>Malpighiales</taxon>
        <taxon>Salicaceae</taxon>
        <taxon>Saliceae</taxon>
        <taxon>Populus</taxon>
    </lineage>
</organism>